<sequence>MHRYRTHTCGALRPSDVGATVRLSGWCHRVRDHGGVLFIDLRDHYGVTQCVVDADSAAFRAAEAVRSEWVIRVDGRVRRRPEGTENADLPTGAVELYITDLEVLGQAVELPMPVFGELDYPEETRLRYRFLDLRREKLHANIMKRGAIIDSLRRRMREGGFFEFQTPILTASSPEGARDFLVPSRLHPGKFYALPQAPQQFKQLTMIAGFDRYFQIAPCFRDEDARADRSPGEFYQLDIEMSFVTQEDVFQAVEPVLRGVFEEFAEGWRVTGTFPRIPYAEAMLKYGVDKPDLRNPLIIVDVTQEFSAEAVTFNAFKSVIRAGGVVRAIPAPGAGAQPRSFFDRLNNWARGEGAPGLGYIVFEEEGGVLSGRGPIAKFVPPEVQAAIAAKAGLKAGDAVFFAAGVEAKAAGLAGKARIRIGDDLGLTDKDQFAFCWITDFPMYEWNEDEKRIDFSHNPFSMPNYDHDGFLGLDPADAETILGIKAFQYDIVCNGIELSSGAIRNHRPDVMEKAFAIAGYGREVLEQKFGGMLNALRMGAPPHGGIAPGVDRIVMLLCHEPNIREVVLFPMNQRAEDLMMGAPSEVTPKQLRELHIRLNLPDRSA</sequence>
<feature type="chain" id="PRO_1000091015" description="Aspartate--tRNA(Asp/Asn) ligase">
    <location>
        <begin position="1"/>
        <end position="604"/>
    </location>
</feature>
<feature type="region of interest" description="Aspartate" evidence="1">
    <location>
        <begin position="199"/>
        <end position="202"/>
    </location>
</feature>
<feature type="binding site" evidence="1">
    <location>
        <position position="175"/>
    </location>
    <ligand>
        <name>L-aspartate</name>
        <dbReference type="ChEBI" id="CHEBI:29991"/>
    </ligand>
</feature>
<feature type="binding site" evidence="1">
    <location>
        <begin position="221"/>
        <end position="223"/>
    </location>
    <ligand>
        <name>ATP</name>
        <dbReference type="ChEBI" id="CHEBI:30616"/>
    </ligand>
</feature>
<feature type="binding site" evidence="1">
    <location>
        <position position="221"/>
    </location>
    <ligand>
        <name>L-aspartate</name>
        <dbReference type="ChEBI" id="CHEBI:29991"/>
    </ligand>
</feature>
<feature type="binding site" evidence="1">
    <location>
        <position position="456"/>
    </location>
    <ligand>
        <name>L-aspartate</name>
        <dbReference type="ChEBI" id="CHEBI:29991"/>
    </ligand>
</feature>
<feature type="binding site" evidence="1">
    <location>
        <position position="496"/>
    </location>
    <ligand>
        <name>ATP</name>
        <dbReference type="ChEBI" id="CHEBI:30616"/>
    </ligand>
</feature>
<feature type="binding site" evidence="1">
    <location>
        <position position="503"/>
    </location>
    <ligand>
        <name>L-aspartate</name>
        <dbReference type="ChEBI" id="CHEBI:29991"/>
    </ligand>
</feature>
<feature type="binding site" evidence="1">
    <location>
        <begin position="548"/>
        <end position="551"/>
    </location>
    <ligand>
        <name>ATP</name>
        <dbReference type="ChEBI" id="CHEBI:30616"/>
    </ligand>
</feature>
<feature type="site" description="Important for tRNA non-discrimination" evidence="1">
    <location>
        <position position="33"/>
    </location>
</feature>
<feature type="site" description="Important for tRNA non-discrimination" evidence="1">
    <location>
        <position position="83"/>
    </location>
</feature>
<proteinExistence type="inferred from homology"/>
<organism>
    <name type="scientific">Methylobacterium sp. (strain 4-46)</name>
    <dbReference type="NCBI Taxonomy" id="426117"/>
    <lineage>
        <taxon>Bacteria</taxon>
        <taxon>Pseudomonadati</taxon>
        <taxon>Pseudomonadota</taxon>
        <taxon>Alphaproteobacteria</taxon>
        <taxon>Hyphomicrobiales</taxon>
        <taxon>Methylobacteriaceae</taxon>
        <taxon>Methylobacterium</taxon>
    </lineage>
</organism>
<comment type="function">
    <text evidence="1">Aspartyl-tRNA synthetase with relaxed tRNA specificity since it is able to aspartylate not only its cognate tRNA(Asp) but also tRNA(Asn). Reaction proceeds in two steps: L-aspartate is first activated by ATP to form Asp-AMP and then transferred to the acceptor end of tRNA(Asp/Asn).</text>
</comment>
<comment type="catalytic activity">
    <reaction evidence="1">
        <text>tRNA(Asx) + L-aspartate + ATP = L-aspartyl-tRNA(Asx) + AMP + diphosphate</text>
        <dbReference type="Rhea" id="RHEA:18349"/>
        <dbReference type="Rhea" id="RHEA-COMP:9710"/>
        <dbReference type="Rhea" id="RHEA-COMP:9711"/>
        <dbReference type="ChEBI" id="CHEBI:29991"/>
        <dbReference type="ChEBI" id="CHEBI:30616"/>
        <dbReference type="ChEBI" id="CHEBI:33019"/>
        <dbReference type="ChEBI" id="CHEBI:78442"/>
        <dbReference type="ChEBI" id="CHEBI:78516"/>
        <dbReference type="ChEBI" id="CHEBI:456215"/>
        <dbReference type="EC" id="6.1.1.23"/>
    </reaction>
</comment>
<comment type="subunit">
    <text evidence="1">Homodimer.</text>
</comment>
<comment type="subcellular location">
    <subcellularLocation>
        <location evidence="1">Cytoplasm</location>
    </subcellularLocation>
</comment>
<comment type="similarity">
    <text evidence="1">Belongs to the class-II aminoacyl-tRNA synthetase family. Type 1 subfamily.</text>
</comment>
<reference key="1">
    <citation type="submission" date="2008-02" db="EMBL/GenBank/DDBJ databases">
        <title>Complete sequence of chromosome of Methylobacterium sp. 4-46.</title>
        <authorList>
            <consortium name="US DOE Joint Genome Institute"/>
            <person name="Copeland A."/>
            <person name="Lucas S."/>
            <person name="Lapidus A."/>
            <person name="Glavina del Rio T."/>
            <person name="Dalin E."/>
            <person name="Tice H."/>
            <person name="Bruce D."/>
            <person name="Goodwin L."/>
            <person name="Pitluck S."/>
            <person name="Chertkov O."/>
            <person name="Brettin T."/>
            <person name="Detter J.C."/>
            <person name="Han C."/>
            <person name="Kuske C.R."/>
            <person name="Schmutz J."/>
            <person name="Larimer F."/>
            <person name="Land M."/>
            <person name="Hauser L."/>
            <person name="Kyrpides N."/>
            <person name="Ivanova N."/>
            <person name="Marx C.J."/>
            <person name="Richardson P."/>
        </authorList>
    </citation>
    <scope>NUCLEOTIDE SEQUENCE [LARGE SCALE GENOMIC DNA]</scope>
    <source>
        <strain>4-46</strain>
    </source>
</reference>
<evidence type="ECO:0000255" key="1">
    <source>
        <dbReference type="HAMAP-Rule" id="MF_00044"/>
    </source>
</evidence>
<accession>B0UI66</accession>
<protein>
    <recommendedName>
        <fullName evidence="1">Aspartate--tRNA(Asp/Asn) ligase</fullName>
        <ecNumber evidence="1">6.1.1.23</ecNumber>
    </recommendedName>
    <alternativeName>
        <fullName evidence="1">Aspartyl-tRNA synthetase</fullName>
        <shortName evidence="1">AspRS</shortName>
    </alternativeName>
    <alternativeName>
        <fullName evidence="1">Non-discriminating aspartyl-tRNA synthetase</fullName>
        <shortName evidence="1">ND-AspRS</shortName>
    </alternativeName>
</protein>
<keyword id="KW-0030">Aminoacyl-tRNA synthetase</keyword>
<keyword id="KW-0067">ATP-binding</keyword>
<keyword id="KW-0963">Cytoplasm</keyword>
<keyword id="KW-0436">Ligase</keyword>
<keyword id="KW-0547">Nucleotide-binding</keyword>
<keyword id="KW-0648">Protein biosynthesis</keyword>
<name>SYDND_METS4</name>
<gene>
    <name evidence="1" type="primary">aspS</name>
    <name type="ordered locus">M446_2465</name>
</gene>
<dbReference type="EC" id="6.1.1.23" evidence="1"/>
<dbReference type="EMBL" id="CP000943">
    <property type="protein sequence ID" value="ACA16917.1"/>
    <property type="molecule type" value="Genomic_DNA"/>
</dbReference>
<dbReference type="RefSeq" id="WP_012332324.1">
    <property type="nucleotide sequence ID" value="NC_010511.1"/>
</dbReference>
<dbReference type="SMR" id="B0UI66"/>
<dbReference type="STRING" id="426117.M446_2465"/>
<dbReference type="KEGG" id="met:M446_2465"/>
<dbReference type="eggNOG" id="COG0173">
    <property type="taxonomic scope" value="Bacteria"/>
</dbReference>
<dbReference type="HOGENOM" id="CLU_014330_3_2_5"/>
<dbReference type="GO" id="GO:0005737">
    <property type="term" value="C:cytoplasm"/>
    <property type="evidence" value="ECO:0007669"/>
    <property type="project" value="UniProtKB-SubCell"/>
</dbReference>
<dbReference type="GO" id="GO:0004815">
    <property type="term" value="F:aspartate-tRNA ligase activity"/>
    <property type="evidence" value="ECO:0007669"/>
    <property type="project" value="UniProtKB-UniRule"/>
</dbReference>
<dbReference type="GO" id="GO:0050560">
    <property type="term" value="F:aspartate-tRNA(Asn) ligase activity"/>
    <property type="evidence" value="ECO:0007669"/>
    <property type="project" value="UniProtKB-EC"/>
</dbReference>
<dbReference type="GO" id="GO:0005524">
    <property type="term" value="F:ATP binding"/>
    <property type="evidence" value="ECO:0007669"/>
    <property type="project" value="UniProtKB-UniRule"/>
</dbReference>
<dbReference type="GO" id="GO:0003676">
    <property type="term" value="F:nucleic acid binding"/>
    <property type="evidence" value="ECO:0007669"/>
    <property type="project" value="InterPro"/>
</dbReference>
<dbReference type="GO" id="GO:0006422">
    <property type="term" value="P:aspartyl-tRNA aminoacylation"/>
    <property type="evidence" value="ECO:0007669"/>
    <property type="project" value="UniProtKB-UniRule"/>
</dbReference>
<dbReference type="CDD" id="cd00777">
    <property type="entry name" value="AspRS_core"/>
    <property type="match status" value="1"/>
</dbReference>
<dbReference type="CDD" id="cd04317">
    <property type="entry name" value="EcAspRS_like_N"/>
    <property type="match status" value="1"/>
</dbReference>
<dbReference type="Gene3D" id="3.30.930.10">
    <property type="entry name" value="Bira Bifunctional Protein, Domain 2"/>
    <property type="match status" value="1"/>
</dbReference>
<dbReference type="Gene3D" id="3.30.1360.30">
    <property type="entry name" value="GAD-like domain"/>
    <property type="match status" value="1"/>
</dbReference>
<dbReference type="Gene3D" id="2.40.50.140">
    <property type="entry name" value="Nucleic acid-binding proteins"/>
    <property type="match status" value="1"/>
</dbReference>
<dbReference type="HAMAP" id="MF_00044">
    <property type="entry name" value="Asp_tRNA_synth_type1"/>
    <property type="match status" value="1"/>
</dbReference>
<dbReference type="InterPro" id="IPR004364">
    <property type="entry name" value="Aa-tRNA-synt_II"/>
</dbReference>
<dbReference type="InterPro" id="IPR006195">
    <property type="entry name" value="aa-tRNA-synth_II"/>
</dbReference>
<dbReference type="InterPro" id="IPR045864">
    <property type="entry name" value="aa-tRNA-synth_II/BPL/LPL"/>
</dbReference>
<dbReference type="InterPro" id="IPR004524">
    <property type="entry name" value="Asp-tRNA-ligase_1"/>
</dbReference>
<dbReference type="InterPro" id="IPR047089">
    <property type="entry name" value="Asp-tRNA-ligase_1_N"/>
</dbReference>
<dbReference type="InterPro" id="IPR002312">
    <property type="entry name" value="Asp/Asn-tRNA-synth_IIb"/>
</dbReference>
<dbReference type="InterPro" id="IPR047090">
    <property type="entry name" value="AspRS_core"/>
</dbReference>
<dbReference type="InterPro" id="IPR004115">
    <property type="entry name" value="GAD-like_sf"/>
</dbReference>
<dbReference type="InterPro" id="IPR029351">
    <property type="entry name" value="GAD_dom"/>
</dbReference>
<dbReference type="InterPro" id="IPR012340">
    <property type="entry name" value="NA-bd_OB-fold"/>
</dbReference>
<dbReference type="InterPro" id="IPR004365">
    <property type="entry name" value="NA-bd_OB_tRNA"/>
</dbReference>
<dbReference type="NCBIfam" id="TIGR00459">
    <property type="entry name" value="aspS_bact"/>
    <property type="match status" value="1"/>
</dbReference>
<dbReference type="NCBIfam" id="NF001750">
    <property type="entry name" value="PRK00476.1"/>
    <property type="match status" value="1"/>
</dbReference>
<dbReference type="PANTHER" id="PTHR22594:SF5">
    <property type="entry name" value="ASPARTATE--TRNA LIGASE, MITOCHONDRIAL"/>
    <property type="match status" value="1"/>
</dbReference>
<dbReference type="PANTHER" id="PTHR22594">
    <property type="entry name" value="ASPARTYL/LYSYL-TRNA SYNTHETASE"/>
    <property type="match status" value="1"/>
</dbReference>
<dbReference type="Pfam" id="PF02938">
    <property type="entry name" value="GAD"/>
    <property type="match status" value="1"/>
</dbReference>
<dbReference type="Pfam" id="PF00152">
    <property type="entry name" value="tRNA-synt_2"/>
    <property type="match status" value="1"/>
</dbReference>
<dbReference type="Pfam" id="PF01336">
    <property type="entry name" value="tRNA_anti-codon"/>
    <property type="match status" value="1"/>
</dbReference>
<dbReference type="PRINTS" id="PR01042">
    <property type="entry name" value="TRNASYNTHASP"/>
</dbReference>
<dbReference type="SUPFAM" id="SSF55681">
    <property type="entry name" value="Class II aaRS and biotin synthetases"/>
    <property type="match status" value="1"/>
</dbReference>
<dbReference type="SUPFAM" id="SSF55261">
    <property type="entry name" value="GAD domain-like"/>
    <property type="match status" value="1"/>
</dbReference>
<dbReference type="SUPFAM" id="SSF50249">
    <property type="entry name" value="Nucleic acid-binding proteins"/>
    <property type="match status" value="1"/>
</dbReference>
<dbReference type="PROSITE" id="PS50862">
    <property type="entry name" value="AA_TRNA_LIGASE_II"/>
    <property type="match status" value="1"/>
</dbReference>